<feature type="chain" id="PRO_0000417116" description="CRISPR-associated exonuclease Cas4/endonuclease Cas1 fusion">
    <location>
        <begin position="1"/>
        <end position="580"/>
    </location>
</feature>
<feature type="region of interest" description="CRISPR-associated exonuclease Cas4">
    <location>
        <begin position="1"/>
        <end position="223"/>
    </location>
</feature>
<feature type="region of interest" description="CRISPR-associated endonuclease Cas1">
    <location>
        <begin position="248"/>
        <end position="580"/>
    </location>
</feature>
<feature type="binding site" evidence="3">
    <location>
        <position position="44"/>
    </location>
    <ligand>
        <name>[4Fe-4S] cluster</name>
        <dbReference type="ChEBI" id="CHEBI:49883"/>
    </ligand>
</feature>
<feature type="binding site" evidence="3">
    <location>
        <position position="112"/>
    </location>
    <ligand>
        <name>Mn(2+)</name>
        <dbReference type="ChEBI" id="CHEBI:29035"/>
        <label>1</label>
    </ligand>
</feature>
<feature type="binding site" evidence="3">
    <location>
        <position position="125"/>
    </location>
    <ligand>
        <name>Mn(2+)</name>
        <dbReference type="ChEBI" id="CHEBI:29035"/>
        <label>1</label>
    </ligand>
</feature>
<feature type="binding site" evidence="3">
    <location>
        <position position="212"/>
    </location>
    <ligand>
        <name>[4Fe-4S] cluster</name>
        <dbReference type="ChEBI" id="CHEBI:49883"/>
    </ligand>
</feature>
<feature type="binding site" evidence="3">
    <location>
        <position position="215"/>
    </location>
    <ligand>
        <name>[4Fe-4S] cluster</name>
        <dbReference type="ChEBI" id="CHEBI:49883"/>
    </ligand>
</feature>
<feature type="binding site" evidence="3">
    <location>
        <position position="221"/>
    </location>
    <ligand>
        <name>[4Fe-4S] cluster</name>
        <dbReference type="ChEBI" id="CHEBI:49883"/>
    </ligand>
</feature>
<feature type="binding site" evidence="2">
    <location>
        <position position="401"/>
    </location>
    <ligand>
        <name>Mn(2+)</name>
        <dbReference type="ChEBI" id="CHEBI:29035"/>
        <label>2</label>
    </ligand>
</feature>
<feature type="binding site" evidence="2">
    <location>
        <position position="472"/>
    </location>
    <ligand>
        <name>Mn(2+)</name>
        <dbReference type="ChEBI" id="CHEBI:29035"/>
        <label>2</label>
    </ligand>
</feature>
<feature type="binding site" evidence="2">
    <location>
        <position position="487"/>
    </location>
    <ligand>
        <name>Mn(2+)</name>
        <dbReference type="ChEBI" id="CHEBI:29035"/>
        <label>2</label>
    </ligand>
</feature>
<accession>Q2RY11</accession>
<gene>
    <name type="primary">cas4-cas1</name>
    <name type="ordered locus">Rru_A0179</name>
</gene>
<sequence length="580" mass="63240">MAPSDTPPSAEDLPSQGELALFAPPATAEDALVPASMVNAWIYCPRLAVLEWGRGEKARSVDLIAGLRAHQATESGPTPALPDPMVLREDQSLKTRRLSLSSERLGLTAELDLLDVEEGMVIPVEIKVGKRPSVDEGAYLPERAQVCAQALLLREAGYTCLEGALWFAESRERVTVDLTEALVTATLVATSDLRLTVASGRLPPPLDHSAKCPRCSLLPICLPDEIAWFRKGSIARTPPPPASPALPLYGQTPGARIGKKDYTLVIQVEGEADRSLALDEISEVVLAGPVSLTTPAIHELLRREIPVAWMSSGFWFLGSTGGQGPRSAAVRTAQYALAGDERRRQAFARDLVSAKIRNGRTLLRRNWRGAEAERQIALDRLARLAERATTAETTACLLGIEGEAAAVYFRAFPQLFTQAVTTLPAFAFERRNRRPPADPVNACLSLCYAVLTRTLSSALSIAGLDPWKGFYHTERPGRPALALDLIESFRPVLADSTVLMVLNNGEIGTNDFLYAGGGCALKPNARRGLIAAYERRLDQETTHPVFGYQLSMRRLIQVQARLLARFVSGDIPRYPHYCPR</sequence>
<dbReference type="EC" id="3.1.-.-"/>
<dbReference type="EC" id="3.1.12.1"/>
<dbReference type="EMBL" id="CP000230">
    <property type="protein sequence ID" value="ABC20984.1"/>
    <property type="molecule type" value="Genomic_DNA"/>
</dbReference>
<dbReference type="RefSeq" id="YP_425271.1">
    <property type="nucleotide sequence ID" value="NC_007643.1"/>
</dbReference>
<dbReference type="SMR" id="Q2RY11"/>
<dbReference type="STRING" id="269796.Rru_A0179"/>
<dbReference type="EnsemblBacteria" id="ABC20984">
    <property type="protein sequence ID" value="ABC20984"/>
    <property type="gene ID" value="Rru_A0179"/>
</dbReference>
<dbReference type="KEGG" id="rru:Rru_A0179"/>
<dbReference type="PATRIC" id="fig|269796.9.peg.233"/>
<dbReference type="eggNOG" id="COG1468">
    <property type="taxonomic scope" value="Bacteria"/>
</dbReference>
<dbReference type="eggNOG" id="COG1518">
    <property type="taxonomic scope" value="Bacteria"/>
</dbReference>
<dbReference type="HOGENOM" id="CLU_466793_0_0_5"/>
<dbReference type="PhylomeDB" id="Q2RY11"/>
<dbReference type="Proteomes" id="UP000001929">
    <property type="component" value="Chromosome"/>
</dbReference>
<dbReference type="GO" id="GO:0051539">
    <property type="term" value="F:4 iron, 4 sulfur cluster binding"/>
    <property type="evidence" value="ECO:0007669"/>
    <property type="project" value="UniProtKB-KW"/>
</dbReference>
<dbReference type="GO" id="GO:0003677">
    <property type="term" value="F:DNA binding"/>
    <property type="evidence" value="ECO:0007669"/>
    <property type="project" value="UniProtKB-KW"/>
</dbReference>
<dbReference type="GO" id="GO:0004519">
    <property type="term" value="F:endonuclease activity"/>
    <property type="evidence" value="ECO:0007669"/>
    <property type="project" value="UniProtKB-UniRule"/>
</dbReference>
<dbReference type="GO" id="GO:0004527">
    <property type="term" value="F:exonuclease activity"/>
    <property type="evidence" value="ECO:0007669"/>
    <property type="project" value="UniProtKB-KW"/>
</dbReference>
<dbReference type="GO" id="GO:0046872">
    <property type="term" value="F:metal ion binding"/>
    <property type="evidence" value="ECO:0007669"/>
    <property type="project" value="UniProtKB-UniRule"/>
</dbReference>
<dbReference type="GO" id="GO:0051607">
    <property type="term" value="P:defense response to virus"/>
    <property type="evidence" value="ECO:0007669"/>
    <property type="project" value="UniProtKB-UniRule"/>
</dbReference>
<dbReference type="GO" id="GO:0043571">
    <property type="term" value="P:maintenance of CRISPR repeat elements"/>
    <property type="evidence" value="ECO:0007669"/>
    <property type="project" value="UniProtKB-UniRule"/>
</dbReference>
<dbReference type="CDD" id="cd09634">
    <property type="entry name" value="Cas1_I-II-III"/>
    <property type="match status" value="1"/>
</dbReference>
<dbReference type="FunFam" id="3.90.320.10:FF:000050">
    <property type="entry name" value="CRISPR-associated exonuclease Cas4"/>
    <property type="match status" value="1"/>
</dbReference>
<dbReference type="Gene3D" id="3.90.320.10">
    <property type="match status" value="1"/>
</dbReference>
<dbReference type="Gene3D" id="1.20.120.920">
    <property type="entry name" value="CRISPR-associated endonuclease Cas1, C-terminal domain"/>
    <property type="match status" value="1"/>
</dbReference>
<dbReference type="Gene3D" id="3.100.10.20">
    <property type="entry name" value="CRISPR-associated endonuclease Cas1, N-terminal domain"/>
    <property type="match status" value="1"/>
</dbReference>
<dbReference type="HAMAP" id="MF_01470">
    <property type="entry name" value="Cas1"/>
    <property type="match status" value="1"/>
</dbReference>
<dbReference type="InterPro" id="IPR050646">
    <property type="entry name" value="Cas1"/>
</dbReference>
<dbReference type="InterPro" id="IPR002729">
    <property type="entry name" value="CRISPR-assoc_Cas1"/>
</dbReference>
<dbReference type="InterPro" id="IPR042206">
    <property type="entry name" value="CRISPR-assoc_Cas1_C"/>
</dbReference>
<dbReference type="InterPro" id="IPR042211">
    <property type="entry name" value="CRISPR-assoc_Cas1_N"/>
</dbReference>
<dbReference type="InterPro" id="IPR013343">
    <property type="entry name" value="CRISPR-assoc_prot_Cas4"/>
</dbReference>
<dbReference type="InterPro" id="IPR022765">
    <property type="entry name" value="Dna2/Cas4_DUF83"/>
</dbReference>
<dbReference type="InterPro" id="IPR011604">
    <property type="entry name" value="PDDEXK-like_dom_sf"/>
</dbReference>
<dbReference type="NCBIfam" id="TIGR00287">
    <property type="entry name" value="cas1"/>
    <property type="match status" value="1"/>
</dbReference>
<dbReference type="NCBIfam" id="TIGR00372">
    <property type="entry name" value="cas4"/>
    <property type="match status" value="1"/>
</dbReference>
<dbReference type="PANTHER" id="PTHR34353">
    <property type="entry name" value="CRISPR-ASSOCIATED ENDONUCLEASE CAS1 1"/>
    <property type="match status" value="1"/>
</dbReference>
<dbReference type="PANTHER" id="PTHR34353:SF2">
    <property type="entry name" value="CRISPR-ASSOCIATED ENDONUCLEASE CAS1 1"/>
    <property type="match status" value="1"/>
</dbReference>
<dbReference type="Pfam" id="PF01867">
    <property type="entry name" value="Cas_Cas1"/>
    <property type="match status" value="1"/>
</dbReference>
<dbReference type="Pfam" id="PF01930">
    <property type="entry name" value="Cas_Cas4"/>
    <property type="match status" value="1"/>
</dbReference>
<name>CS4F1_RHORT</name>
<comment type="function">
    <text evidence="1 3">CRISPR (clustered regularly interspaced short palindromic repeat), is an adaptive immune system that provides protection against mobile genetic elements (viruses, transposable elements and conjugative plasmids). CRISPR clusters contain spacers, sequences complementary to antecedent mobile elements, and target invading nucleic acids. CRISPR clusters are transcribed and processed into CRISPR RNA (crRNA) (By similarity). The Cas4 region acts as a ssDNA exonuclease, while the Cas1 region acts as a dsDNA endonuclease. Involved in the integration of spacer DNA into the CRISPR cassette (By similarity).</text>
</comment>
<comment type="catalytic activity">
    <reaction>
        <text>exonucleolytic cleavage in the 5'- to 3'-direction to yield nucleoside 3'-phosphates.</text>
        <dbReference type="EC" id="3.1.12.1"/>
    </reaction>
</comment>
<comment type="cofactor">
    <cofactor evidence="3">
        <name>[4Fe-4S] cluster</name>
        <dbReference type="ChEBI" id="CHEBI:49883"/>
    </cofactor>
    <text evidence="3">Binds 1 [4Fe-4S] cluster per subunit.</text>
</comment>
<comment type="cofactor">
    <cofactor evidence="1">
        <name>Mg(2+)</name>
        <dbReference type="ChEBI" id="CHEBI:18420"/>
    </cofactor>
    <cofactor evidence="1">
        <name>Mn(2+)</name>
        <dbReference type="ChEBI" id="CHEBI:29035"/>
    </cofactor>
</comment>
<comment type="subunit">
    <text evidence="1">Homodimer, forms a heterotetramer with a Cas2 homodimer.</text>
</comment>
<comment type="similarity">
    <text evidence="4">In the N-terminal section; belongs to the CRISPR-associated exonuclease Cas4 family.</text>
</comment>
<comment type="similarity">
    <text evidence="4">In the C-terminal section; belongs to the CRISPR-associated endonuclease Cas1 family.</text>
</comment>
<evidence type="ECO:0000250" key="1"/>
<evidence type="ECO:0000250" key="2">
    <source>
        <dbReference type="UniProtKB" id="Q02ML7"/>
    </source>
</evidence>
<evidence type="ECO:0000250" key="3">
    <source>
        <dbReference type="UniProtKB" id="Q97TX9"/>
    </source>
</evidence>
<evidence type="ECO:0000305" key="4"/>
<reference key="1">
    <citation type="journal article" date="2011" name="Stand. Genomic Sci.">
        <title>Complete genome sequence of Rhodospirillum rubrum type strain (S1).</title>
        <authorList>
            <person name="Munk A.C."/>
            <person name="Copeland A."/>
            <person name="Lucas S."/>
            <person name="Lapidus A."/>
            <person name="Del Rio T.G."/>
            <person name="Barry K."/>
            <person name="Detter J.C."/>
            <person name="Hammon N."/>
            <person name="Israni S."/>
            <person name="Pitluck S."/>
            <person name="Brettin T."/>
            <person name="Bruce D."/>
            <person name="Han C."/>
            <person name="Tapia R."/>
            <person name="Gilna P."/>
            <person name="Schmutz J."/>
            <person name="Larimer F."/>
            <person name="Land M."/>
            <person name="Kyrpides N.C."/>
            <person name="Mavromatis K."/>
            <person name="Richardson P."/>
            <person name="Rohde M."/>
            <person name="Goeker M."/>
            <person name="Klenk H.P."/>
            <person name="Zhang Y."/>
            <person name="Roberts G.P."/>
            <person name="Reslewic S."/>
            <person name="Schwartz D.C."/>
        </authorList>
    </citation>
    <scope>NUCLEOTIDE SEQUENCE [LARGE SCALE GENOMIC DNA]</scope>
    <source>
        <strain>ATCC 11170 / ATH 1.1.1 / DSM 467 / LMG 4362 / NCIMB 8255 / S1</strain>
    </source>
</reference>
<organism>
    <name type="scientific">Rhodospirillum rubrum (strain ATCC 11170 / ATH 1.1.1 / DSM 467 / LMG 4362 / NCIMB 8255 / S1)</name>
    <dbReference type="NCBI Taxonomy" id="269796"/>
    <lineage>
        <taxon>Bacteria</taxon>
        <taxon>Pseudomonadati</taxon>
        <taxon>Pseudomonadota</taxon>
        <taxon>Alphaproteobacteria</taxon>
        <taxon>Rhodospirillales</taxon>
        <taxon>Rhodospirillaceae</taxon>
        <taxon>Rhodospirillum</taxon>
    </lineage>
</organism>
<proteinExistence type="inferred from homology"/>
<keyword id="KW-0004">4Fe-4S</keyword>
<keyword id="KW-0051">Antiviral defense</keyword>
<keyword id="KW-0238">DNA-binding</keyword>
<keyword id="KW-0255">Endonuclease</keyword>
<keyword id="KW-0269">Exonuclease</keyword>
<keyword id="KW-0378">Hydrolase</keyword>
<keyword id="KW-0408">Iron</keyword>
<keyword id="KW-0411">Iron-sulfur</keyword>
<keyword id="KW-0460">Magnesium</keyword>
<keyword id="KW-0464">Manganese</keyword>
<keyword id="KW-0479">Metal-binding</keyword>
<keyword id="KW-0540">Nuclease</keyword>
<keyword id="KW-1185">Reference proteome</keyword>
<protein>
    <recommendedName>
        <fullName>CRISPR-associated exonuclease Cas4/endonuclease Cas1 fusion</fullName>
        <ecNumber>3.1.-.-</ecNumber>
        <ecNumber>3.1.12.1</ecNumber>
    </recommendedName>
</protein>